<organism>
    <name type="scientific">Homo sapiens</name>
    <name type="common">Human</name>
    <dbReference type="NCBI Taxonomy" id="9606"/>
    <lineage>
        <taxon>Eukaryota</taxon>
        <taxon>Metazoa</taxon>
        <taxon>Chordata</taxon>
        <taxon>Craniata</taxon>
        <taxon>Vertebrata</taxon>
        <taxon>Euteleostomi</taxon>
        <taxon>Mammalia</taxon>
        <taxon>Eutheria</taxon>
        <taxon>Euarchontoglires</taxon>
        <taxon>Primates</taxon>
        <taxon>Haplorrhini</taxon>
        <taxon>Catarrhini</taxon>
        <taxon>Hominidae</taxon>
        <taxon>Homo</taxon>
    </lineage>
</organism>
<feature type="chain" id="PRO_0000150543" description="Olfactory receptor 4D11">
    <location>
        <begin position="1"/>
        <end position="311"/>
    </location>
</feature>
<feature type="topological domain" description="Extracellular" evidence="1">
    <location>
        <begin position="1"/>
        <end position="25"/>
    </location>
</feature>
<feature type="transmembrane region" description="Helical; Name=1" evidence="1">
    <location>
        <begin position="26"/>
        <end position="49"/>
    </location>
</feature>
<feature type="topological domain" description="Cytoplasmic" evidence="1">
    <location>
        <begin position="50"/>
        <end position="57"/>
    </location>
</feature>
<feature type="transmembrane region" description="Helical; Name=2" evidence="1">
    <location>
        <begin position="58"/>
        <end position="79"/>
    </location>
</feature>
<feature type="topological domain" description="Extracellular" evidence="1">
    <location>
        <begin position="80"/>
        <end position="100"/>
    </location>
</feature>
<feature type="transmembrane region" description="Helical; Name=3" evidence="1">
    <location>
        <begin position="101"/>
        <end position="120"/>
    </location>
</feature>
<feature type="topological domain" description="Cytoplasmic" evidence="1">
    <location>
        <begin position="121"/>
        <end position="139"/>
    </location>
</feature>
<feature type="transmembrane region" description="Helical; Name=4" evidence="1">
    <location>
        <begin position="140"/>
        <end position="158"/>
    </location>
</feature>
<feature type="topological domain" description="Extracellular" evidence="1">
    <location>
        <begin position="159"/>
        <end position="195"/>
    </location>
</feature>
<feature type="transmembrane region" description="Helical; Name=5" evidence="1">
    <location>
        <begin position="196"/>
        <end position="219"/>
    </location>
</feature>
<feature type="topological domain" description="Cytoplasmic" evidence="1">
    <location>
        <begin position="220"/>
        <end position="235"/>
    </location>
</feature>
<feature type="transmembrane region" description="Helical; Name=6" evidence="1">
    <location>
        <begin position="236"/>
        <end position="258"/>
    </location>
</feature>
<feature type="topological domain" description="Extracellular" evidence="1">
    <location>
        <begin position="259"/>
        <end position="269"/>
    </location>
</feature>
<feature type="transmembrane region" description="Helical; Name=7" evidence="1">
    <location>
        <begin position="270"/>
        <end position="289"/>
    </location>
</feature>
<feature type="topological domain" description="Cytoplasmic" evidence="1">
    <location>
        <begin position="290"/>
        <end position="311"/>
    </location>
</feature>
<feature type="glycosylation site" description="N-linked (GlcNAc...) asparagine" evidence="1">
    <location>
        <position position="5"/>
    </location>
</feature>
<feature type="disulfide bond" evidence="2">
    <location>
        <begin position="97"/>
        <end position="189"/>
    </location>
</feature>
<feature type="sequence variant" id="VAR_034197" description="In dbSNP:rs7120079.">
    <original>F</original>
    <variation>L</variation>
    <location>
        <position position="197"/>
    </location>
</feature>
<comment type="function">
    <text evidence="3">Odorant receptor.</text>
</comment>
<comment type="subcellular location">
    <subcellularLocation>
        <location>Cell membrane</location>
        <topology>Multi-pass membrane protein</topology>
    </subcellularLocation>
</comment>
<comment type="similarity">
    <text evidence="2">Belongs to the G-protein coupled receptor 1 family.</text>
</comment>
<comment type="online information" name="Human Olfactory Receptor Data Exploratorium (HORDE)">
    <link uri="http://genome.weizmann.ac.il/horde/card/index/symbol:OR4D11"/>
</comment>
<reference key="1">
    <citation type="submission" date="2001-07" db="EMBL/GenBank/DDBJ databases">
        <title>Genome-wide discovery and analysis of human seven transmembrane helix receptor genes.</title>
        <authorList>
            <person name="Suwa M."/>
            <person name="Sato T."/>
            <person name="Okouchi I."/>
            <person name="Arita M."/>
            <person name="Futami K."/>
            <person name="Matsumoto S."/>
            <person name="Tsutsumi S."/>
            <person name="Aburatani H."/>
            <person name="Asai K."/>
            <person name="Akiyama Y."/>
        </authorList>
    </citation>
    <scope>NUCLEOTIDE SEQUENCE [GENOMIC DNA]</scope>
</reference>
<proteinExistence type="inferred from homology"/>
<keyword id="KW-1003">Cell membrane</keyword>
<keyword id="KW-1015">Disulfide bond</keyword>
<keyword id="KW-0297">G-protein coupled receptor</keyword>
<keyword id="KW-0325">Glycoprotein</keyword>
<keyword id="KW-0472">Membrane</keyword>
<keyword id="KW-0552">Olfaction</keyword>
<keyword id="KW-0675">Receptor</keyword>
<keyword id="KW-1185">Reference proteome</keyword>
<keyword id="KW-0716">Sensory transduction</keyword>
<keyword id="KW-0807">Transducer</keyword>
<keyword id="KW-0812">Transmembrane</keyword>
<keyword id="KW-1133">Transmembrane helix</keyword>
<sequence>MELGNVTRVKEFIFLGLTQSQDQSLVLFLFLCLVYMTTLLGNLLIMVTVTCESRLHTPMYFLLRNLAILDICFSSTTAPKVLLDLLSKKKTISYTSCMTQIFLFHLLGGADIFSLSVMAFDCYMAISKPLHYVTIMSRGQCTALISASWMGGFVHSIVQISLLLPLPFCGPNVLDTFYCDVPQVLKLTCTDTFALEFLMISNNGLVTTLWFIFLLVSYTVILMTLRSQAGGGRRKAISTCTSHITVVTLHFVPCIYVYARPFTALPTEKAISVTFTVISPLLNPLIYTLRNQEMKSAMRRLKRRLVPSERE</sequence>
<dbReference type="EMBL" id="AB065810">
    <property type="protein sequence ID" value="BAC06029.1"/>
    <property type="molecule type" value="Genomic_DNA"/>
</dbReference>
<dbReference type="CCDS" id="CCDS31563.1"/>
<dbReference type="RefSeq" id="NP_001004706.1">
    <property type="nucleotide sequence ID" value="NM_001004706.1"/>
</dbReference>
<dbReference type="SMR" id="Q8NGI4"/>
<dbReference type="FunCoup" id="Q8NGI4">
    <property type="interactions" value="416"/>
</dbReference>
<dbReference type="STRING" id="9606.ENSP00000320077"/>
<dbReference type="GlyCosmos" id="Q8NGI4">
    <property type="glycosylation" value="1 site, No reported glycans"/>
</dbReference>
<dbReference type="GlyGen" id="Q8NGI4">
    <property type="glycosylation" value="1 site"/>
</dbReference>
<dbReference type="PhosphoSitePlus" id="Q8NGI4"/>
<dbReference type="BioMuta" id="OR4D11"/>
<dbReference type="DMDM" id="71153030"/>
<dbReference type="jPOST" id="Q8NGI4"/>
<dbReference type="MassIVE" id="Q8NGI4"/>
<dbReference type="PaxDb" id="9606-ENSP00000320077"/>
<dbReference type="PeptideAtlas" id="Q8NGI4"/>
<dbReference type="Antibodypedia" id="65199">
    <property type="antibodies" value="63 antibodies from 18 providers"/>
</dbReference>
<dbReference type="DNASU" id="219986"/>
<dbReference type="Ensembl" id="ENST00000313253.1">
    <property type="protein sequence ID" value="ENSP00000320077.1"/>
    <property type="gene ID" value="ENSG00000176200.1"/>
</dbReference>
<dbReference type="GeneID" id="219986"/>
<dbReference type="KEGG" id="hsa:219986"/>
<dbReference type="MANE-Select" id="ENST00000313253.1">
    <property type="protein sequence ID" value="ENSP00000320077.1"/>
    <property type="RefSeq nucleotide sequence ID" value="NM_001004706.1"/>
    <property type="RefSeq protein sequence ID" value="NP_001004706.1"/>
</dbReference>
<dbReference type="UCSC" id="uc001noa.1">
    <property type="organism name" value="human"/>
</dbReference>
<dbReference type="AGR" id="HGNC:15174"/>
<dbReference type="CTD" id="219986"/>
<dbReference type="GeneCards" id="OR4D11"/>
<dbReference type="HGNC" id="HGNC:15174">
    <property type="gene designation" value="OR4D11"/>
</dbReference>
<dbReference type="HPA" id="ENSG00000176200">
    <property type="expression patterns" value="Not detected"/>
</dbReference>
<dbReference type="neXtProt" id="NX_Q8NGI4"/>
<dbReference type="OpenTargets" id="ENSG00000176200"/>
<dbReference type="PharmGKB" id="PA32269"/>
<dbReference type="VEuPathDB" id="HostDB:ENSG00000176200"/>
<dbReference type="eggNOG" id="ENOG502SIBY">
    <property type="taxonomic scope" value="Eukaryota"/>
</dbReference>
<dbReference type="GeneTree" id="ENSGT00940000163523"/>
<dbReference type="HOGENOM" id="CLU_012526_8_1_1"/>
<dbReference type="InParanoid" id="Q8NGI4"/>
<dbReference type="OMA" id="CYMAISK"/>
<dbReference type="OrthoDB" id="9444602at2759"/>
<dbReference type="PAN-GO" id="Q8NGI4">
    <property type="GO annotations" value="2 GO annotations based on evolutionary models"/>
</dbReference>
<dbReference type="PhylomeDB" id="Q8NGI4"/>
<dbReference type="TreeFam" id="TF352732"/>
<dbReference type="PathwayCommons" id="Q8NGI4"/>
<dbReference type="Reactome" id="R-HSA-9752946">
    <property type="pathway name" value="Expression and translocation of olfactory receptors"/>
</dbReference>
<dbReference type="SignaLink" id="Q8NGI4"/>
<dbReference type="BioGRID-ORCS" id="219986">
    <property type="hits" value="15 hits in 742 CRISPR screens"/>
</dbReference>
<dbReference type="GeneWiki" id="OR4D11"/>
<dbReference type="GenomeRNAi" id="219986"/>
<dbReference type="Pharos" id="Q8NGI4">
    <property type="development level" value="Tdark"/>
</dbReference>
<dbReference type="PRO" id="PR:Q8NGI4"/>
<dbReference type="Proteomes" id="UP000005640">
    <property type="component" value="Chromosome 11"/>
</dbReference>
<dbReference type="RNAct" id="Q8NGI4">
    <property type="molecule type" value="protein"/>
</dbReference>
<dbReference type="ExpressionAtlas" id="Q8NGI4">
    <property type="expression patterns" value="baseline and differential"/>
</dbReference>
<dbReference type="GO" id="GO:0005886">
    <property type="term" value="C:plasma membrane"/>
    <property type="evidence" value="ECO:0000318"/>
    <property type="project" value="GO_Central"/>
</dbReference>
<dbReference type="GO" id="GO:0004930">
    <property type="term" value="F:G protein-coupled receptor activity"/>
    <property type="evidence" value="ECO:0007669"/>
    <property type="project" value="UniProtKB-KW"/>
</dbReference>
<dbReference type="GO" id="GO:0004984">
    <property type="term" value="F:olfactory receptor activity"/>
    <property type="evidence" value="ECO:0000318"/>
    <property type="project" value="GO_Central"/>
</dbReference>
<dbReference type="CDD" id="cd15936">
    <property type="entry name" value="7tmA_OR4D-like"/>
    <property type="match status" value="1"/>
</dbReference>
<dbReference type="FunFam" id="1.10.1220.70:FF:000001">
    <property type="entry name" value="Olfactory receptor"/>
    <property type="match status" value="1"/>
</dbReference>
<dbReference type="FunFam" id="1.20.1070.10:FF:000007">
    <property type="entry name" value="Olfactory receptor"/>
    <property type="match status" value="1"/>
</dbReference>
<dbReference type="Gene3D" id="1.20.1070.10">
    <property type="entry name" value="Rhodopsin 7-helix transmembrane proteins"/>
    <property type="match status" value="1"/>
</dbReference>
<dbReference type="InterPro" id="IPR000276">
    <property type="entry name" value="GPCR_Rhodpsn"/>
</dbReference>
<dbReference type="InterPro" id="IPR017452">
    <property type="entry name" value="GPCR_Rhodpsn_7TM"/>
</dbReference>
<dbReference type="InterPro" id="IPR000725">
    <property type="entry name" value="Olfact_rcpt"/>
</dbReference>
<dbReference type="InterPro" id="IPR050427">
    <property type="entry name" value="Olfactory_Receptors"/>
</dbReference>
<dbReference type="PANTHER" id="PTHR48002">
    <property type="entry name" value="OLFACTORY RECEPTOR"/>
    <property type="match status" value="1"/>
</dbReference>
<dbReference type="Pfam" id="PF13853">
    <property type="entry name" value="7tm_4"/>
    <property type="match status" value="1"/>
</dbReference>
<dbReference type="PRINTS" id="PR00237">
    <property type="entry name" value="GPCRRHODOPSN"/>
</dbReference>
<dbReference type="PRINTS" id="PR00245">
    <property type="entry name" value="OLFACTORYR"/>
</dbReference>
<dbReference type="SUPFAM" id="SSF81321">
    <property type="entry name" value="Family A G protein-coupled receptor-like"/>
    <property type="match status" value="1"/>
</dbReference>
<dbReference type="PROSITE" id="PS50262">
    <property type="entry name" value="G_PROTEIN_RECEP_F1_2"/>
    <property type="match status" value="1"/>
</dbReference>
<name>OR4DB_HUMAN</name>
<gene>
    <name type="primary">OR4D11</name>
    <name type="synonym">OR4D11P</name>
</gene>
<evidence type="ECO:0000255" key="1"/>
<evidence type="ECO:0000255" key="2">
    <source>
        <dbReference type="PROSITE-ProRule" id="PRU00521"/>
    </source>
</evidence>
<evidence type="ECO:0000305" key="3"/>
<accession>Q8NGI4</accession>
<protein>
    <recommendedName>
        <fullName>Olfactory receptor 4D11</fullName>
    </recommendedName>
</protein>